<evidence type="ECO:0000250" key="1"/>
<evidence type="ECO:0000255" key="2"/>
<evidence type="ECO:0000305" key="3"/>
<reference key="1">
    <citation type="journal article" date="2000" name="Nucleic Acids Res.">
        <title>Complete genome sequence of the alkaliphilic bacterium Bacillus halodurans and genomic sequence comparison with Bacillus subtilis.</title>
        <authorList>
            <person name="Takami H."/>
            <person name="Nakasone K."/>
            <person name="Takaki Y."/>
            <person name="Maeno G."/>
            <person name="Sasaki R."/>
            <person name="Masui N."/>
            <person name="Fuji F."/>
            <person name="Hirama C."/>
            <person name="Nakamura Y."/>
            <person name="Ogasawara N."/>
            <person name="Kuhara S."/>
            <person name="Horikoshi K."/>
        </authorList>
    </citation>
    <scope>NUCLEOTIDE SEQUENCE [LARGE SCALE GENOMIC DNA]</scope>
    <source>
        <strain>ATCC BAA-125 / DSM 18197 / FERM 7344 / JCM 9153 / C-125</strain>
    </source>
</reference>
<name>YWCE_HALH5</name>
<protein>
    <recommendedName>
        <fullName>Spore morphogenesis and germination protein YwcE</fullName>
    </recommendedName>
</protein>
<proteinExistence type="inferred from homology"/>
<sequence>MDLFFAYMLVASATPLFLWLEHRKIALTSIPFIIIMWVLALSHMFEGFLFDLHHSVFLTAFFVNVIIAHFAALVLYAYPHIRPKSRTFTESMD</sequence>
<gene>
    <name type="primary">ywcE</name>
    <name type="ordered locus">BH2068</name>
</gene>
<accession>Q9KB63</accession>
<comment type="function">
    <text evidence="1">Required for proper spore morphogenesis. Important for spore germination (By similarity).</text>
</comment>
<comment type="subcellular location">
    <subcellularLocation>
        <location evidence="1">Spore membrane</location>
        <topology evidence="1">Multi-pass membrane protein</topology>
    </subcellularLocation>
    <subcellularLocation>
        <location evidence="1">Spore outer membrane</location>
        <topology evidence="1">Multi-pass membrane protein</topology>
    </subcellularLocation>
    <subcellularLocation>
        <location evidence="1">Cell membrane</location>
    </subcellularLocation>
</comment>
<comment type="similarity">
    <text evidence="3">Belongs to the YwcE family.</text>
</comment>
<feature type="chain" id="PRO_0000049957" description="Spore morphogenesis and germination protein YwcE">
    <location>
        <begin position="1"/>
        <end position="93"/>
    </location>
</feature>
<feature type="transmembrane region" description="Helical" evidence="2">
    <location>
        <begin position="1"/>
        <end position="21"/>
    </location>
</feature>
<feature type="transmembrane region" description="Helical" evidence="2">
    <location>
        <begin position="30"/>
        <end position="50"/>
    </location>
</feature>
<feature type="transmembrane region" description="Helical" evidence="2">
    <location>
        <begin position="56"/>
        <end position="76"/>
    </location>
</feature>
<dbReference type="EMBL" id="BA000004">
    <property type="protein sequence ID" value="BAB05787.1"/>
    <property type="molecule type" value="Genomic_DNA"/>
</dbReference>
<dbReference type="PIR" id="D83908">
    <property type="entry name" value="D83908"/>
</dbReference>
<dbReference type="RefSeq" id="WP_010898226.1">
    <property type="nucleotide sequence ID" value="NC_002570.2"/>
</dbReference>
<dbReference type="GeneID" id="87597635"/>
<dbReference type="KEGG" id="bha:BH2068"/>
<dbReference type="eggNOG" id="ENOG5033HBX">
    <property type="taxonomic scope" value="Bacteria"/>
</dbReference>
<dbReference type="HOGENOM" id="CLU_2491159_0_0_9"/>
<dbReference type="OrthoDB" id="2680024at2"/>
<dbReference type="Proteomes" id="UP000001258">
    <property type="component" value="Chromosome"/>
</dbReference>
<dbReference type="GO" id="GO:0043594">
    <property type="term" value="C:outer endospore membrane"/>
    <property type="evidence" value="ECO:0007669"/>
    <property type="project" value="UniProtKB-SubCell"/>
</dbReference>
<dbReference type="GO" id="GO:0005886">
    <property type="term" value="C:plasma membrane"/>
    <property type="evidence" value="ECO:0007669"/>
    <property type="project" value="UniProtKB-SubCell"/>
</dbReference>
<dbReference type="InterPro" id="IPR020185">
    <property type="entry name" value="Spore_morphogenesis_YwcE"/>
</dbReference>
<dbReference type="Pfam" id="PF17368">
    <property type="entry name" value="YwcE"/>
    <property type="match status" value="1"/>
</dbReference>
<organism>
    <name type="scientific">Halalkalibacterium halodurans (strain ATCC BAA-125 / DSM 18197 / FERM 7344 / JCM 9153 / C-125)</name>
    <name type="common">Bacillus halodurans</name>
    <dbReference type="NCBI Taxonomy" id="272558"/>
    <lineage>
        <taxon>Bacteria</taxon>
        <taxon>Bacillati</taxon>
        <taxon>Bacillota</taxon>
        <taxon>Bacilli</taxon>
        <taxon>Bacillales</taxon>
        <taxon>Bacillaceae</taxon>
        <taxon>Halalkalibacterium (ex Joshi et al. 2022)</taxon>
    </lineage>
</organism>
<keyword id="KW-1003">Cell membrane</keyword>
<keyword id="KW-0309">Germination</keyword>
<keyword id="KW-0472">Membrane</keyword>
<keyword id="KW-1185">Reference proteome</keyword>
<keyword id="KW-0812">Transmembrane</keyword>
<keyword id="KW-1133">Transmembrane helix</keyword>